<protein>
    <recommendedName>
        <fullName evidence="1">Lipoyl synthase</fullName>
        <ecNumber evidence="1">2.8.1.8</ecNumber>
    </recommendedName>
    <alternativeName>
        <fullName evidence="1">Lip-syn</fullName>
        <shortName evidence="1">LS</shortName>
    </alternativeName>
    <alternativeName>
        <fullName evidence="1">Lipoate synthase</fullName>
    </alternativeName>
    <alternativeName>
        <fullName evidence="1">Lipoic acid synthase</fullName>
    </alternativeName>
    <alternativeName>
        <fullName evidence="1">Sulfur insertion protein LipA</fullName>
    </alternativeName>
</protein>
<dbReference type="EC" id="2.8.1.8" evidence="1"/>
<dbReference type="EMBL" id="AE008923">
    <property type="protein sequence ID" value="AAM35557.1"/>
    <property type="molecule type" value="Genomic_DNA"/>
</dbReference>
<dbReference type="RefSeq" id="WP_003482719.1">
    <property type="nucleotide sequence ID" value="NC_003919.1"/>
</dbReference>
<dbReference type="SMR" id="Q8PPL8"/>
<dbReference type="GeneID" id="66909866"/>
<dbReference type="KEGG" id="xac:XAC0668"/>
<dbReference type="eggNOG" id="COG0320">
    <property type="taxonomic scope" value="Bacteria"/>
</dbReference>
<dbReference type="HOGENOM" id="CLU_033144_2_1_6"/>
<dbReference type="UniPathway" id="UPA00538">
    <property type="reaction ID" value="UER00593"/>
</dbReference>
<dbReference type="Proteomes" id="UP000000576">
    <property type="component" value="Chromosome"/>
</dbReference>
<dbReference type="GO" id="GO:0005737">
    <property type="term" value="C:cytoplasm"/>
    <property type="evidence" value="ECO:0007669"/>
    <property type="project" value="UniProtKB-SubCell"/>
</dbReference>
<dbReference type="GO" id="GO:0051539">
    <property type="term" value="F:4 iron, 4 sulfur cluster binding"/>
    <property type="evidence" value="ECO:0007669"/>
    <property type="project" value="UniProtKB-UniRule"/>
</dbReference>
<dbReference type="GO" id="GO:0016992">
    <property type="term" value="F:lipoate synthase activity"/>
    <property type="evidence" value="ECO:0007669"/>
    <property type="project" value="UniProtKB-UniRule"/>
</dbReference>
<dbReference type="GO" id="GO:0046872">
    <property type="term" value="F:metal ion binding"/>
    <property type="evidence" value="ECO:0007669"/>
    <property type="project" value="UniProtKB-KW"/>
</dbReference>
<dbReference type="CDD" id="cd01335">
    <property type="entry name" value="Radical_SAM"/>
    <property type="match status" value="1"/>
</dbReference>
<dbReference type="FunFam" id="3.20.20.70:FF:000023">
    <property type="entry name" value="Lipoyl synthase"/>
    <property type="match status" value="1"/>
</dbReference>
<dbReference type="Gene3D" id="3.20.20.70">
    <property type="entry name" value="Aldolase class I"/>
    <property type="match status" value="1"/>
</dbReference>
<dbReference type="HAMAP" id="MF_00206">
    <property type="entry name" value="Lipoyl_synth"/>
    <property type="match status" value="1"/>
</dbReference>
<dbReference type="InterPro" id="IPR013785">
    <property type="entry name" value="Aldolase_TIM"/>
</dbReference>
<dbReference type="InterPro" id="IPR006638">
    <property type="entry name" value="Elp3/MiaA/NifB-like_rSAM"/>
</dbReference>
<dbReference type="InterPro" id="IPR031691">
    <property type="entry name" value="LIAS_N"/>
</dbReference>
<dbReference type="InterPro" id="IPR003698">
    <property type="entry name" value="Lipoyl_synth"/>
</dbReference>
<dbReference type="InterPro" id="IPR007197">
    <property type="entry name" value="rSAM"/>
</dbReference>
<dbReference type="NCBIfam" id="TIGR00510">
    <property type="entry name" value="lipA"/>
    <property type="match status" value="1"/>
</dbReference>
<dbReference type="NCBIfam" id="NF004019">
    <property type="entry name" value="PRK05481.1"/>
    <property type="match status" value="1"/>
</dbReference>
<dbReference type="NCBIfam" id="NF009544">
    <property type="entry name" value="PRK12928.1"/>
    <property type="match status" value="1"/>
</dbReference>
<dbReference type="PANTHER" id="PTHR10949">
    <property type="entry name" value="LIPOYL SYNTHASE"/>
    <property type="match status" value="1"/>
</dbReference>
<dbReference type="PANTHER" id="PTHR10949:SF0">
    <property type="entry name" value="LIPOYL SYNTHASE, MITOCHONDRIAL"/>
    <property type="match status" value="1"/>
</dbReference>
<dbReference type="Pfam" id="PF16881">
    <property type="entry name" value="LIAS_N"/>
    <property type="match status" value="1"/>
</dbReference>
<dbReference type="Pfam" id="PF04055">
    <property type="entry name" value="Radical_SAM"/>
    <property type="match status" value="1"/>
</dbReference>
<dbReference type="PIRSF" id="PIRSF005963">
    <property type="entry name" value="Lipoyl_synth"/>
    <property type="match status" value="1"/>
</dbReference>
<dbReference type="SFLD" id="SFLDF00271">
    <property type="entry name" value="lipoyl_synthase"/>
    <property type="match status" value="1"/>
</dbReference>
<dbReference type="SFLD" id="SFLDG01058">
    <property type="entry name" value="lipoyl_synthase_like"/>
    <property type="match status" value="1"/>
</dbReference>
<dbReference type="SMART" id="SM00729">
    <property type="entry name" value="Elp3"/>
    <property type="match status" value="1"/>
</dbReference>
<dbReference type="SUPFAM" id="SSF102114">
    <property type="entry name" value="Radical SAM enzymes"/>
    <property type="match status" value="1"/>
</dbReference>
<dbReference type="PROSITE" id="PS51918">
    <property type="entry name" value="RADICAL_SAM"/>
    <property type="match status" value="1"/>
</dbReference>
<sequence>MTQPIARSIPLQVVSGDTAAPAPLQTGVKQIGGDKINRSPVQFVDAPVLRKPSWIRVRIPSGNAVQNLKAKLRENRLVTVCEEASCPNIHECFSHGTATFMILGEVCTRRCSFCDVAHGRPKPPDASEPASLAATVADMGLKYVVVTSVDRDDLRDGGAQHFVDCISAIRTSSPNTRIEILTPDFRGKGRMDRALEILALSPPDVFNHNIETVPDLYPNVRPGADYQWSLTLLQRFKAQHPSIATKSGIMLGLGETMEQVQATLRDLRAHDVDMITIGQYLQPTPHHHPVMRYWTPEEYKALEDYGNALGFSHVASGPMVRSSYHADRQAAGAGVAA</sequence>
<keyword id="KW-0004">4Fe-4S</keyword>
<keyword id="KW-0963">Cytoplasm</keyword>
<keyword id="KW-0408">Iron</keyword>
<keyword id="KW-0411">Iron-sulfur</keyword>
<keyword id="KW-0479">Metal-binding</keyword>
<keyword id="KW-0949">S-adenosyl-L-methionine</keyword>
<keyword id="KW-0808">Transferase</keyword>
<evidence type="ECO:0000255" key="1">
    <source>
        <dbReference type="HAMAP-Rule" id="MF_00206"/>
    </source>
</evidence>
<evidence type="ECO:0000255" key="2">
    <source>
        <dbReference type="PROSITE-ProRule" id="PRU01266"/>
    </source>
</evidence>
<accession>Q8PPL8</accession>
<reference key="1">
    <citation type="journal article" date="2002" name="Nature">
        <title>Comparison of the genomes of two Xanthomonas pathogens with differing host specificities.</title>
        <authorList>
            <person name="da Silva A.C.R."/>
            <person name="Ferro J.A."/>
            <person name="Reinach F.C."/>
            <person name="Farah C.S."/>
            <person name="Furlan L.R."/>
            <person name="Quaggio R.B."/>
            <person name="Monteiro-Vitorello C.B."/>
            <person name="Van Sluys M.A."/>
            <person name="Almeida N.F. Jr."/>
            <person name="Alves L.M.C."/>
            <person name="do Amaral A.M."/>
            <person name="Bertolini M.C."/>
            <person name="Camargo L.E.A."/>
            <person name="Camarotte G."/>
            <person name="Cannavan F."/>
            <person name="Cardozo J."/>
            <person name="Chambergo F."/>
            <person name="Ciapina L.P."/>
            <person name="Cicarelli R.M.B."/>
            <person name="Coutinho L.L."/>
            <person name="Cursino-Santos J.R."/>
            <person name="El-Dorry H."/>
            <person name="Faria J.B."/>
            <person name="Ferreira A.J.S."/>
            <person name="Ferreira R.C.C."/>
            <person name="Ferro M.I.T."/>
            <person name="Formighieri E.F."/>
            <person name="Franco M.C."/>
            <person name="Greggio C.C."/>
            <person name="Gruber A."/>
            <person name="Katsuyama A.M."/>
            <person name="Kishi L.T."/>
            <person name="Leite R.P."/>
            <person name="Lemos E.G.M."/>
            <person name="Lemos M.V.F."/>
            <person name="Locali E.C."/>
            <person name="Machado M.A."/>
            <person name="Madeira A.M.B.N."/>
            <person name="Martinez-Rossi N.M."/>
            <person name="Martins E.C."/>
            <person name="Meidanis J."/>
            <person name="Menck C.F.M."/>
            <person name="Miyaki C.Y."/>
            <person name="Moon D.H."/>
            <person name="Moreira L.M."/>
            <person name="Novo M.T.M."/>
            <person name="Okura V.K."/>
            <person name="Oliveira M.C."/>
            <person name="Oliveira V.R."/>
            <person name="Pereira H.A."/>
            <person name="Rossi A."/>
            <person name="Sena J.A.D."/>
            <person name="Silva C."/>
            <person name="de Souza R.F."/>
            <person name="Spinola L.A.F."/>
            <person name="Takita M.A."/>
            <person name="Tamura R.E."/>
            <person name="Teixeira E.C."/>
            <person name="Tezza R.I.D."/>
            <person name="Trindade dos Santos M."/>
            <person name="Truffi D."/>
            <person name="Tsai S.M."/>
            <person name="White F.F."/>
            <person name="Setubal J.C."/>
            <person name="Kitajima J.P."/>
        </authorList>
    </citation>
    <scope>NUCLEOTIDE SEQUENCE [LARGE SCALE GENOMIC DNA]</scope>
    <source>
        <strain>306</strain>
    </source>
</reference>
<feature type="chain" id="PRO_0000102383" description="Lipoyl synthase">
    <location>
        <begin position="1"/>
        <end position="337"/>
    </location>
</feature>
<feature type="domain" description="Radical SAM core" evidence="2">
    <location>
        <begin position="93"/>
        <end position="312"/>
    </location>
</feature>
<feature type="binding site" evidence="1">
    <location>
        <position position="81"/>
    </location>
    <ligand>
        <name>[4Fe-4S] cluster</name>
        <dbReference type="ChEBI" id="CHEBI:49883"/>
        <label>1</label>
    </ligand>
</feature>
<feature type="binding site" evidence="1">
    <location>
        <position position="86"/>
    </location>
    <ligand>
        <name>[4Fe-4S] cluster</name>
        <dbReference type="ChEBI" id="CHEBI:49883"/>
        <label>1</label>
    </ligand>
</feature>
<feature type="binding site" evidence="1">
    <location>
        <position position="92"/>
    </location>
    <ligand>
        <name>[4Fe-4S] cluster</name>
        <dbReference type="ChEBI" id="CHEBI:49883"/>
        <label>1</label>
    </ligand>
</feature>
<feature type="binding site" evidence="1">
    <location>
        <position position="107"/>
    </location>
    <ligand>
        <name>[4Fe-4S] cluster</name>
        <dbReference type="ChEBI" id="CHEBI:49883"/>
        <label>2</label>
        <note>4Fe-4S-S-AdoMet</note>
    </ligand>
</feature>
<feature type="binding site" evidence="1">
    <location>
        <position position="111"/>
    </location>
    <ligand>
        <name>[4Fe-4S] cluster</name>
        <dbReference type="ChEBI" id="CHEBI:49883"/>
        <label>2</label>
        <note>4Fe-4S-S-AdoMet</note>
    </ligand>
</feature>
<feature type="binding site" evidence="1">
    <location>
        <position position="114"/>
    </location>
    <ligand>
        <name>[4Fe-4S] cluster</name>
        <dbReference type="ChEBI" id="CHEBI:49883"/>
        <label>2</label>
        <note>4Fe-4S-S-AdoMet</note>
    </ligand>
</feature>
<feature type="binding site" evidence="1">
    <location>
        <position position="323"/>
    </location>
    <ligand>
        <name>[4Fe-4S] cluster</name>
        <dbReference type="ChEBI" id="CHEBI:49883"/>
        <label>1</label>
    </ligand>
</feature>
<name>LIPA_XANAC</name>
<gene>
    <name evidence="1" type="primary">lipA</name>
    <name type="ordered locus">XAC0668</name>
</gene>
<organism>
    <name type="scientific">Xanthomonas axonopodis pv. citri (strain 306)</name>
    <dbReference type="NCBI Taxonomy" id="190486"/>
    <lineage>
        <taxon>Bacteria</taxon>
        <taxon>Pseudomonadati</taxon>
        <taxon>Pseudomonadota</taxon>
        <taxon>Gammaproteobacteria</taxon>
        <taxon>Lysobacterales</taxon>
        <taxon>Lysobacteraceae</taxon>
        <taxon>Xanthomonas</taxon>
    </lineage>
</organism>
<comment type="function">
    <text evidence="1">Catalyzes the radical-mediated insertion of two sulfur atoms into the C-6 and C-8 positions of the octanoyl moiety bound to the lipoyl domains of lipoate-dependent enzymes, thereby converting the octanoylated domains into lipoylated derivatives.</text>
</comment>
<comment type="catalytic activity">
    <reaction evidence="1">
        <text>[[Fe-S] cluster scaffold protein carrying a second [4Fe-4S](2+) cluster] + N(6)-octanoyl-L-lysyl-[protein] + 2 oxidized [2Fe-2S]-[ferredoxin] + 2 S-adenosyl-L-methionine + 4 H(+) = [[Fe-S] cluster scaffold protein] + N(6)-[(R)-dihydrolipoyl]-L-lysyl-[protein] + 4 Fe(3+) + 2 hydrogen sulfide + 2 5'-deoxyadenosine + 2 L-methionine + 2 reduced [2Fe-2S]-[ferredoxin]</text>
        <dbReference type="Rhea" id="RHEA:16585"/>
        <dbReference type="Rhea" id="RHEA-COMP:9928"/>
        <dbReference type="Rhea" id="RHEA-COMP:10000"/>
        <dbReference type="Rhea" id="RHEA-COMP:10001"/>
        <dbReference type="Rhea" id="RHEA-COMP:10475"/>
        <dbReference type="Rhea" id="RHEA-COMP:14568"/>
        <dbReference type="Rhea" id="RHEA-COMP:14569"/>
        <dbReference type="ChEBI" id="CHEBI:15378"/>
        <dbReference type="ChEBI" id="CHEBI:17319"/>
        <dbReference type="ChEBI" id="CHEBI:29034"/>
        <dbReference type="ChEBI" id="CHEBI:29919"/>
        <dbReference type="ChEBI" id="CHEBI:33722"/>
        <dbReference type="ChEBI" id="CHEBI:33737"/>
        <dbReference type="ChEBI" id="CHEBI:33738"/>
        <dbReference type="ChEBI" id="CHEBI:57844"/>
        <dbReference type="ChEBI" id="CHEBI:59789"/>
        <dbReference type="ChEBI" id="CHEBI:78809"/>
        <dbReference type="ChEBI" id="CHEBI:83100"/>
        <dbReference type="EC" id="2.8.1.8"/>
    </reaction>
</comment>
<comment type="cofactor">
    <cofactor evidence="1">
        <name>[4Fe-4S] cluster</name>
        <dbReference type="ChEBI" id="CHEBI:49883"/>
    </cofactor>
    <text evidence="1">Binds 2 [4Fe-4S] clusters per subunit. One cluster is coordinated with 3 cysteines and an exchangeable S-adenosyl-L-methionine.</text>
</comment>
<comment type="pathway">
    <text evidence="1">Protein modification; protein lipoylation via endogenous pathway; protein N(6)-(lipoyl)lysine from octanoyl-[acyl-carrier-protein]: step 2/2.</text>
</comment>
<comment type="subcellular location">
    <subcellularLocation>
        <location evidence="1">Cytoplasm</location>
    </subcellularLocation>
</comment>
<comment type="similarity">
    <text evidence="1">Belongs to the radical SAM superfamily. Lipoyl synthase family.</text>
</comment>
<proteinExistence type="inferred from homology"/>